<reference key="1">
    <citation type="journal article" date="2004" name="Proc. Natl. Acad. Sci. U.S.A.">
        <title>Complete genomes of two clinical Staphylococcus aureus strains: evidence for the rapid evolution of virulence and drug resistance.</title>
        <authorList>
            <person name="Holden M.T.G."/>
            <person name="Feil E.J."/>
            <person name="Lindsay J.A."/>
            <person name="Peacock S.J."/>
            <person name="Day N.P.J."/>
            <person name="Enright M.C."/>
            <person name="Foster T.J."/>
            <person name="Moore C.E."/>
            <person name="Hurst L."/>
            <person name="Atkin R."/>
            <person name="Barron A."/>
            <person name="Bason N."/>
            <person name="Bentley S.D."/>
            <person name="Chillingworth C."/>
            <person name="Chillingworth T."/>
            <person name="Churcher C."/>
            <person name="Clark L."/>
            <person name="Corton C."/>
            <person name="Cronin A."/>
            <person name="Doggett J."/>
            <person name="Dowd L."/>
            <person name="Feltwell T."/>
            <person name="Hance Z."/>
            <person name="Harris B."/>
            <person name="Hauser H."/>
            <person name="Holroyd S."/>
            <person name="Jagels K."/>
            <person name="James K.D."/>
            <person name="Lennard N."/>
            <person name="Line A."/>
            <person name="Mayes R."/>
            <person name="Moule S."/>
            <person name="Mungall K."/>
            <person name="Ormond D."/>
            <person name="Quail M.A."/>
            <person name="Rabbinowitsch E."/>
            <person name="Rutherford K.M."/>
            <person name="Sanders M."/>
            <person name="Sharp S."/>
            <person name="Simmonds M."/>
            <person name="Stevens K."/>
            <person name="Whitehead S."/>
            <person name="Barrell B.G."/>
            <person name="Spratt B.G."/>
            <person name="Parkhill J."/>
        </authorList>
    </citation>
    <scope>NUCLEOTIDE SEQUENCE [LARGE SCALE GENOMIC DNA]</scope>
    <source>
        <strain>MSSA476</strain>
    </source>
</reference>
<protein>
    <recommendedName>
        <fullName>RNA polymerase sigma factor SigS</fullName>
    </recommendedName>
</protein>
<organism>
    <name type="scientific">Staphylococcus aureus (strain MSSA476)</name>
    <dbReference type="NCBI Taxonomy" id="282459"/>
    <lineage>
        <taxon>Bacteria</taxon>
        <taxon>Bacillati</taxon>
        <taxon>Bacillota</taxon>
        <taxon>Bacilli</taxon>
        <taxon>Bacillales</taxon>
        <taxon>Staphylococcaceae</taxon>
        <taxon>Staphylococcus</taxon>
    </lineage>
</organism>
<dbReference type="EMBL" id="BX571857">
    <property type="protein sequence ID" value="CAG43503.1"/>
    <property type="molecule type" value="Genomic_DNA"/>
</dbReference>
<dbReference type="RefSeq" id="WP_000671052.1">
    <property type="nucleotide sequence ID" value="NC_002953.3"/>
</dbReference>
<dbReference type="SMR" id="Q6G8F3"/>
<dbReference type="KEGG" id="sas:SAS1700"/>
<dbReference type="HOGENOM" id="CLU_047691_20_2_9"/>
<dbReference type="GO" id="GO:0003677">
    <property type="term" value="F:DNA binding"/>
    <property type="evidence" value="ECO:0007669"/>
    <property type="project" value="UniProtKB-KW"/>
</dbReference>
<dbReference type="GO" id="GO:0016987">
    <property type="term" value="F:sigma factor activity"/>
    <property type="evidence" value="ECO:0007669"/>
    <property type="project" value="UniProtKB-KW"/>
</dbReference>
<dbReference type="GO" id="GO:0006352">
    <property type="term" value="P:DNA-templated transcription initiation"/>
    <property type="evidence" value="ECO:0007669"/>
    <property type="project" value="InterPro"/>
</dbReference>
<dbReference type="Gene3D" id="1.10.10.10">
    <property type="entry name" value="Winged helix-like DNA-binding domain superfamily/Winged helix DNA-binding domain"/>
    <property type="match status" value="1"/>
</dbReference>
<dbReference type="InterPro" id="IPR014284">
    <property type="entry name" value="RNA_pol_sigma-70_dom"/>
</dbReference>
<dbReference type="InterPro" id="IPR007627">
    <property type="entry name" value="RNA_pol_sigma70_r2"/>
</dbReference>
<dbReference type="InterPro" id="IPR013325">
    <property type="entry name" value="RNA_pol_sigma_r2"/>
</dbReference>
<dbReference type="InterPro" id="IPR016032">
    <property type="entry name" value="Sig_transdc_resp-reg_C-effctor"/>
</dbReference>
<dbReference type="InterPro" id="IPR036388">
    <property type="entry name" value="WH-like_DNA-bd_sf"/>
</dbReference>
<dbReference type="NCBIfam" id="TIGR02937">
    <property type="entry name" value="sigma70-ECF"/>
    <property type="match status" value="1"/>
</dbReference>
<dbReference type="Pfam" id="PF04542">
    <property type="entry name" value="Sigma70_r2"/>
    <property type="match status" value="1"/>
</dbReference>
<dbReference type="SUPFAM" id="SSF46894">
    <property type="entry name" value="C-terminal effector domain of the bipartite response regulators"/>
    <property type="match status" value="1"/>
</dbReference>
<dbReference type="SUPFAM" id="SSF88946">
    <property type="entry name" value="Sigma2 domain of RNA polymerase sigma factors"/>
    <property type="match status" value="1"/>
</dbReference>
<comment type="function">
    <text evidence="1">Sigma factors are initiation factors that promote the attachment of RNA polymerase to specific initiation sites and are then released. Sigma-S contributes to the protection against external stress, thus playing a role in cellular fitness and survival (By similarity).</text>
</comment>
<comment type="similarity">
    <text evidence="2">Belongs to the sigma-70 factor family.</text>
</comment>
<accession>Q6G8F3</accession>
<keyword id="KW-0238">DNA-binding</keyword>
<keyword id="KW-0731">Sigma factor</keyword>
<keyword id="KW-0804">Transcription</keyword>
<keyword id="KW-0805">Transcription regulation</keyword>
<gene>
    <name type="primary">sigS</name>
    <name type="ordered locus">SAS1700</name>
</gene>
<proteinExistence type="inferred from homology"/>
<feature type="chain" id="PRO_0000367449" description="RNA polymerase sigma factor SigS">
    <location>
        <begin position="1"/>
        <end position="156"/>
    </location>
</feature>
<feature type="DNA-binding region" description="H-T-H motif" evidence="1">
    <location>
        <begin position="126"/>
        <end position="145"/>
    </location>
</feature>
<feature type="short sequence motif" description="Polymerase core binding">
    <location>
        <begin position="29"/>
        <end position="44"/>
    </location>
</feature>
<sequence>MKFNDVYNKHHKIIHHLLKKYNISYNYDEYYQLLLIKMWQLSQIYKPSSKQSLSSFLFTRLNFYLIDLFRQQNQLKDVILCENNSPTLTEQPTYFNEHDLRLQDIFKLLNQRERLWLKLYLEGYKQFEIAEIMSLSLSTIKLIKMSVKRKCQHNFN</sequence>
<evidence type="ECO:0000250" key="1"/>
<evidence type="ECO:0000305" key="2"/>
<name>SIGS_STAAS</name>